<reference key="1">
    <citation type="journal article" date="2009" name="PLoS Genet.">
        <title>Organised genome dynamics in the Escherichia coli species results in highly diverse adaptive paths.</title>
        <authorList>
            <person name="Touchon M."/>
            <person name="Hoede C."/>
            <person name="Tenaillon O."/>
            <person name="Barbe V."/>
            <person name="Baeriswyl S."/>
            <person name="Bidet P."/>
            <person name="Bingen E."/>
            <person name="Bonacorsi S."/>
            <person name="Bouchier C."/>
            <person name="Bouvet O."/>
            <person name="Calteau A."/>
            <person name="Chiapello H."/>
            <person name="Clermont O."/>
            <person name="Cruveiller S."/>
            <person name="Danchin A."/>
            <person name="Diard M."/>
            <person name="Dossat C."/>
            <person name="Karoui M.E."/>
            <person name="Frapy E."/>
            <person name="Garry L."/>
            <person name="Ghigo J.M."/>
            <person name="Gilles A.M."/>
            <person name="Johnson J."/>
            <person name="Le Bouguenec C."/>
            <person name="Lescat M."/>
            <person name="Mangenot S."/>
            <person name="Martinez-Jehanne V."/>
            <person name="Matic I."/>
            <person name="Nassif X."/>
            <person name="Oztas S."/>
            <person name="Petit M.A."/>
            <person name="Pichon C."/>
            <person name="Rouy Z."/>
            <person name="Ruf C.S."/>
            <person name="Schneider D."/>
            <person name="Tourret J."/>
            <person name="Vacherie B."/>
            <person name="Vallenet D."/>
            <person name="Medigue C."/>
            <person name="Rocha E.P.C."/>
            <person name="Denamur E."/>
        </authorList>
    </citation>
    <scope>NUCLEOTIDE SEQUENCE [LARGE SCALE GENOMIC DNA]</scope>
    <source>
        <strain>ATCC 35469 / DSM 13698 / BCRC 15582 / CCUG 18766 / IAM 14443 / JCM 21226 / LMG 7866 / NBRC 102419 / NCTC 12128 / CDC 0568-73</strain>
    </source>
</reference>
<evidence type="ECO:0000255" key="1">
    <source>
        <dbReference type="HAMAP-Rule" id="MF_01092"/>
    </source>
</evidence>
<protein>
    <recommendedName>
        <fullName evidence="1">Cell division protein ZapD</fullName>
    </recommendedName>
    <alternativeName>
        <fullName evidence="1">Z ring-associated protein D</fullName>
    </alternativeName>
</protein>
<gene>
    <name evidence="1" type="primary">zapD</name>
    <name type="ordered locus">EFER_0123</name>
</gene>
<sequence length="247" mass="28440">MLTQVLFEHPLNEKMRTWLRIEFLIQQLSVNLPVADHAGALHFFRNIADLLDVFERGEVRTELLKELERQQRKLQAWIEVPGVDQDRIEALRTELKNAGSILISAPRIGQFLREDRLIALVRQRLSIPGGCCSFDLPTLHIWLHMPQAMRDAQIETWLASLSPLNHALTLVLDLIRNSVPFRKQTSLNGFYQDNGEDADLLRLQLPLDSQLYPQISGHKSRFAIRFMPLDSENGLVPERLDFELACC</sequence>
<proteinExistence type="inferred from homology"/>
<organism>
    <name type="scientific">Escherichia fergusonii (strain ATCC 35469 / DSM 13698 / CCUG 18766 / IAM 14443 / JCM 21226 / LMG 7866 / NBRC 102419 / NCTC 12128 / CDC 0568-73)</name>
    <dbReference type="NCBI Taxonomy" id="585054"/>
    <lineage>
        <taxon>Bacteria</taxon>
        <taxon>Pseudomonadati</taxon>
        <taxon>Pseudomonadota</taxon>
        <taxon>Gammaproteobacteria</taxon>
        <taxon>Enterobacterales</taxon>
        <taxon>Enterobacteriaceae</taxon>
        <taxon>Escherichia</taxon>
    </lineage>
</organism>
<dbReference type="EMBL" id="CU928158">
    <property type="protein sequence ID" value="CAQ87706.1"/>
    <property type="molecule type" value="Genomic_DNA"/>
</dbReference>
<dbReference type="RefSeq" id="WP_000957725.1">
    <property type="nucleotide sequence ID" value="NC_011740.1"/>
</dbReference>
<dbReference type="SMR" id="B7LWG7"/>
<dbReference type="GeneID" id="75058791"/>
<dbReference type="KEGG" id="efe:EFER_0123"/>
<dbReference type="HOGENOM" id="CLU_076303_0_0_6"/>
<dbReference type="OrthoDB" id="5294622at2"/>
<dbReference type="Proteomes" id="UP000000745">
    <property type="component" value="Chromosome"/>
</dbReference>
<dbReference type="GO" id="GO:0032153">
    <property type="term" value="C:cell division site"/>
    <property type="evidence" value="ECO:0007669"/>
    <property type="project" value="TreeGrafter"/>
</dbReference>
<dbReference type="GO" id="GO:0005737">
    <property type="term" value="C:cytoplasm"/>
    <property type="evidence" value="ECO:0007669"/>
    <property type="project" value="UniProtKB-SubCell"/>
</dbReference>
<dbReference type="GO" id="GO:0000917">
    <property type="term" value="P:division septum assembly"/>
    <property type="evidence" value="ECO:0007669"/>
    <property type="project" value="UniProtKB-KW"/>
</dbReference>
<dbReference type="GO" id="GO:0043093">
    <property type="term" value="P:FtsZ-dependent cytokinesis"/>
    <property type="evidence" value="ECO:0007669"/>
    <property type="project" value="UniProtKB-UniRule"/>
</dbReference>
<dbReference type="FunFam" id="1.10.3900.10:FF:000001">
    <property type="entry name" value="Cell division protein ZapD"/>
    <property type="match status" value="1"/>
</dbReference>
<dbReference type="FunFam" id="2.60.440.10:FF:000001">
    <property type="entry name" value="Cell division protein ZapD"/>
    <property type="match status" value="1"/>
</dbReference>
<dbReference type="Gene3D" id="1.10.3900.10">
    <property type="entry name" value="YacF-like"/>
    <property type="match status" value="1"/>
</dbReference>
<dbReference type="Gene3D" id="2.60.440.10">
    <property type="entry name" value="YacF-like domains"/>
    <property type="match status" value="1"/>
</dbReference>
<dbReference type="HAMAP" id="MF_01092">
    <property type="entry name" value="ZapD"/>
    <property type="match status" value="1"/>
</dbReference>
<dbReference type="InterPro" id="IPR009777">
    <property type="entry name" value="ZapD"/>
</dbReference>
<dbReference type="InterPro" id="IPR027462">
    <property type="entry name" value="ZapD_C"/>
</dbReference>
<dbReference type="InterPro" id="IPR036268">
    <property type="entry name" value="ZapD_sf"/>
</dbReference>
<dbReference type="NCBIfam" id="NF003653">
    <property type="entry name" value="PRK05287.1-1"/>
    <property type="match status" value="1"/>
</dbReference>
<dbReference type="NCBIfam" id="NF003655">
    <property type="entry name" value="PRK05287.1-3"/>
    <property type="match status" value="1"/>
</dbReference>
<dbReference type="PANTHER" id="PTHR39455">
    <property type="entry name" value="CELL DIVISION PROTEIN ZAPD"/>
    <property type="match status" value="1"/>
</dbReference>
<dbReference type="PANTHER" id="PTHR39455:SF1">
    <property type="entry name" value="CELL DIVISION PROTEIN ZAPD"/>
    <property type="match status" value="1"/>
</dbReference>
<dbReference type="Pfam" id="PF07072">
    <property type="entry name" value="ZapD"/>
    <property type="match status" value="1"/>
</dbReference>
<dbReference type="SUPFAM" id="SSF160950">
    <property type="entry name" value="YacF-like"/>
    <property type="match status" value="1"/>
</dbReference>
<accession>B7LWG7</accession>
<feature type="chain" id="PRO_1000136944" description="Cell division protein ZapD">
    <location>
        <begin position="1"/>
        <end position="247"/>
    </location>
</feature>
<keyword id="KW-0131">Cell cycle</keyword>
<keyword id="KW-0132">Cell division</keyword>
<keyword id="KW-0963">Cytoplasm</keyword>
<keyword id="KW-0717">Septation</keyword>
<name>ZAPD_ESCF3</name>
<comment type="function">
    <text evidence="1">Cell division factor that enhances FtsZ-ring assembly. Directly interacts with FtsZ and promotes bundling of FtsZ protofilaments, with a reduction in FtsZ GTPase activity.</text>
</comment>
<comment type="subunit">
    <text evidence="1">Interacts with FtsZ.</text>
</comment>
<comment type="subcellular location">
    <subcellularLocation>
        <location evidence="1">Cytoplasm</location>
    </subcellularLocation>
    <text evidence="1">Localizes to mid-cell in an FtsZ-dependent manner.</text>
</comment>
<comment type="similarity">
    <text evidence="1">Belongs to the ZapD family.</text>
</comment>